<organism>
    <name type="scientific">Escherichia fergusonii (strain ATCC 35469 / DSM 13698 / CCUG 18766 / IAM 14443 / JCM 21226 / LMG 7866 / NBRC 102419 / NCTC 12128 / CDC 0568-73)</name>
    <dbReference type="NCBI Taxonomy" id="585054"/>
    <lineage>
        <taxon>Bacteria</taxon>
        <taxon>Pseudomonadati</taxon>
        <taxon>Pseudomonadota</taxon>
        <taxon>Gammaproteobacteria</taxon>
        <taxon>Enterobacterales</taxon>
        <taxon>Enterobacteriaceae</taxon>
        <taxon>Escherichia</taxon>
    </lineage>
</organism>
<feature type="chain" id="PRO_1000121439" description="Large ribosomal subunit protein bL12">
    <location>
        <begin position="1"/>
        <end position="121"/>
    </location>
</feature>
<sequence length="121" mass="12295">MSITKDQIIEAVAAMSVMDVVELISAMEEKFGVSAAAAVAVAAGPVEAAEEKTEFDVILKAAGANKVAVIKAVRGATGLGLKEAKDLVESAPAALKEGVSKDDAEALKKALEEAGAEVEVK</sequence>
<name>RL7_ESCF3</name>
<protein>
    <recommendedName>
        <fullName evidence="1">Large ribosomal subunit protein bL12</fullName>
    </recommendedName>
    <alternativeName>
        <fullName evidence="2">50S ribosomal protein L7/L12</fullName>
    </alternativeName>
</protein>
<comment type="function">
    <text evidence="1">Forms part of the ribosomal stalk which helps the ribosome interact with GTP-bound translation factors. Is thus essential for accurate translation.</text>
</comment>
<comment type="subunit">
    <text evidence="1">Homodimer. Part of the ribosomal stalk of the 50S ribosomal subunit. Forms a multimeric L10(L12)X complex, where L10 forms an elongated spine to which 2 to 4 L12 dimers bind in a sequential fashion. Binds GTP-bound translation factors.</text>
</comment>
<comment type="similarity">
    <text evidence="1">Belongs to the bacterial ribosomal protein bL12 family.</text>
</comment>
<dbReference type="EMBL" id="CU928158">
    <property type="protein sequence ID" value="CAQ91219.1"/>
    <property type="molecule type" value="Genomic_DNA"/>
</dbReference>
<dbReference type="RefSeq" id="WP_000028878.1">
    <property type="nucleotide sequence ID" value="NC_011740.1"/>
</dbReference>
<dbReference type="SMR" id="B7LUL6"/>
<dbReference type="GeneID" id="86944525"/>
<dbReference type="KEGG" id="efe:EFER_3768"/>
<dbReference type="HOGENOM" id="CLU_086499_3_2_6"/>
<dbReference type="OrthoDB" id="9811748at2"/>
<dbReference type="Proteomes" id="UP000000745">
    <property type="component" value="Chromosome"/>
</dbReference>
<dbReference type="GO" id="GO:0022625">
    <property type="term" value="C:cytosolic large ribosomal subunit"/>
    <property type="evidence" value="ECO:0007669"/>
    <property type="project" value="TreeGrafter"/>
</dbReference>
<dbReference type="GO" id="GO:0003729">
    <property type="term" value="F:mRNA binding"/>
    <property type="evidence" value="ECO:0007669"/>
    <property type="project" value="TreeGrafter"/>
</dbReference>
<dbReference type="GO" id="GO:0003735">
    <property type="term" value="F:structural constituent of ribosome"/>
    <property type="evidence" value="ECO:0007669"/>
    <property type="project" value="InterPro"/>
</dbReference>
<dbReference type="GO" id="GO:0006412">
    <property type="term" value="P:translation"/>
    <property type="evidence" value="ECO:0007669"/>
    <property type="project" value="UniProtKB-UniRule"/>
</dbReference>
<dbReference type="CDD" id="cd00387">
    <property type="entry name" value="Ribosomal_L7_L12"/>
    <property type="match status" value="1"/>
</dbReference>
<dbReference type="FunFam" id="1.20.5.710:FF:000001">
    <property type="entry name" value="50S ribosomal protein L7/L12"/>
    <property type="match status" value="1"/>
</dbReference>
<dbReference type="FunFam" id="3.30.1390.10:FF:000001">
    <property type="entry name" value="50S ribosomal protein L7/L12"/>
    <property type="match status" value="1"/>
</dbReference>
<dbReference type="Gene3D" id="3.30.1390.10">
    <property type="match status" value="1"/>
</dbReference>
<dbReference type="Gene3D" id="1.20.5.710">
    <property type="entry name" value="Single helix bin"/>
    <property type="match status" value="1"/>
</dbReference>
<dbReference type="HAMAP" id="MF_00368">
    <property type="entry name" value="Ribosomal_bL12"/>
    <property type="match status" value="1"/>
</dbReference>
<dbReference type="InterPro" id="IPR000206">
    <property type="entry name" value="Ribosomal_bL12"/>
</dbReference>
<dbReference type="InterPro" id="IPR013823">
    <property type="entry name" value="Ribosomal_bL12_C"/>
</dbReference>
<dbReference type="InterPro" id="IPR014719">
    <property type="entry name" value="Ribosomal_bL12_C/ClpS-like"/>
</dbReference>
<dbReference type="InterPro" id="IPR008932">
    <property type="entry name" value="Ribosomal_bL12_oligo"/>
</dbReference>
<dbReference type="InterPro" id="IPR036235">
    <property type="entry name" value="Ribosomal_bL12_oligo_N_sf"/>
</dbReference>
<dbReference type="NCBIfam" id="TIGR00855">
    <property type="entry name" value="L12"/>
    <property type="match status" value="1"/>
</dbReference>
<dbReference type="PANTHER" id="PTHR45987">
    <property type="entry name" value="39S RIBOSOMAL PROTEIN L12"/>
    <property type="match status" value="1"/>
</dbReference>
<dbReference type="PANTHER" id="PTHR45987:SF4">
    <property type="entry name" value="LARGE RIBOSOMAL SUBUNIT PROTEIN BL12M"/>
    <property type="match status" value="1"/>
</dbReference>
<dbReference type="Pfam" id="PF00542">
    <property type="entry name" value="Ribosomal_L12"/>
    <property type="match status" value="1"/>
</dbReference>
<dbReference type="Pfam" id="PF16320">
    <property type="entry name" value="Ribosomal_L12_N"/>
    <property type="match status" value="1"/>
</dbReference>
<dbReference type="SUPFAM" id="SSF54736">
    <property type="entry name" value="ClpS-like"/>
    <property type="match status" value="1"/>
</dbReference>
<dbReference type="SUPFAM" id="SSF48300">
    <property type="entry name" value="Ribosomal protein L7/12, oligomerisation (N-terminal) domain"/>
    <property type="match status" value="1"/>
</dbReference>
<proteinExistence type="inferred from homology"/>
<evidence type="ECO:0000255" key="1">
    <source>
        <dbReference type="HAMAP-Rule" id="MF_00368"/>
    </source>
</evidence>
<evidence type="ECO:0000305" key="2"/>
<keyword id="KW-0687">Ribonucleoprotein</keyword>
<keyword id="KW-0689">Ribosomal protein</keyword>
<reference key="1">
    <citation type="journal article" date="2009" name="PLoS Genet.">
        <title>Organised genome dynamics in the Escherichia coli species results in highly diverse adaptive paths.</title>
        <authorList>
            <person name="Touchon M."/>
            <person name="Hoede C."/>
            <person name="Tenaillon O."/>
            <person name="Barbe V."/>
            <person name="Baeriswyl S."/>
            <person name="Bidet P."/>
            <person name="Bingen E."/>
            <person name="Bonacorsi S."/>
            <person name="Bouchier C."/>
            <person name="Bouvet O."/>
            <person name="Calteau A."/>
            <person name="Chiapello H."/>
            <person name="Clermont O."/>
            <person name="Cruveiller S."/>
            <person name="Danchin A."/>
            <person name="Diard M."/>
            <person name="Dossat C."/>
            <person name="Karoui M.E."/>
            <person name="Frapy E."/>
            <person name="Garry L."/>
            <person name="Ghigo J.M."/>
            <person name="Gilles A.M."/>
            <person name="Johnson J."/>
            <person name="Le Bouguenec C."/>
            <person name="Lescat M."/>
            <person name="Mangenot S."/>
            <person name="Martinez-Jehanne V."/>
            <person name="Matic I."/>
            <person name="Nassif X."/>
            <person name="Oztas S."/>
            <person name="Petit M.A."/>
            <person name="Pichon C."/>
            <person name="Rouy Z."/>
            <person name="Ruf C.S."/>
            <person name="Schneider D."/>
            <person name="Tourret J."/>
            <person name="Vacherie B."/>
            <person name="Vallenet D."/>
            <person name="Medigue C."/>
            <person name="Rocha E.P.C."/>
            <person name="Denamur E."/>
        </authorList>
    </citation>
    <scope>NUCLEOTIDE SEQUENCE [LARGE SCALE GENOMIC DNA]</scope>
    <source>
        <strain>ATCC 35469 / DSM 13698 / BCRC 15582 / CCUG 18766 / IAM 14443 / JCM 21226 / LMG 7866 / NBRC 102419 / NCTC 12128 / CDC 0568-73</strain>
    </source>
</reference>
<gene>
    <name evidence="1" type="primary">rplL</name>
    <name type="ordered locus">EFER_3768</name>
</gene>
<accession>B7LUL6</accession>